<organism>
    <name type="scientific">Burkholderia lata (strain ATCC 17760 / DSM 23089 / LMG 22485 / NCIMB 9086 / R18194 / 383)</name>
    <dbReference type="NCBI Taxonomy" id="482957"/>
    <lineage>
        <taxon>Bacteria</taxon>
        <taxon>Pseudomonadati</taxon>
        <taxon>Pseudomonadota</taxon>
        <taxon>Betaproteobacteria</taxon>
        <taxon>Burkholderiales</taxon>
        <taxon>Burkholderiaceae</taxon>
        <taxon>Burkholderia</taxon>
        <taxon>Burkholderia cepacia complex</taxon>
    </lineage>
</organism>
<feature type="chain" id="PRO_1000017798" description="Methylglyoxal synthase">
    <location>
        <begin position="1"/>
        <end position="130"/>
    </location>
</feature>
<feature type="domain" description="MGS-like" evidence="1">
    <location>
        <begin position="1"/>
        <end position="130"/>
    </location>
</feature>
<feature type="active site" description="Proton donor/acceptor" evidence="1">
    <location>
        <position position="63"/>
    </location>
</feature>
<feature type="binding site" evidence="1">
    <location>
        <position position="11"/>
    </location>
    <ligand>
        <name>substrate</name>
    </ligand>
</feature>
<feature type="binding site" evidence="1">
    <location>
        <position position="15"/>
    </location>
    <ligand>
        <name>substrate</name>
    </ligand>
</feature>
<feature type="binding site" evidence="1">
    <location>
        <begin position="37"/>
        <end position="40"/>
    </location>
    <ligand>
        <name>substrate</name>
    </ligand>
</feature>
<feature type="binding site" evidence="1">
    <location>
        <begin position="57"/>
        <end position="58"/>
    </location>
    <ligand>
        <name>substrate</name>
    </ligand>
</feature>
<feature type="binding site" evidence="1">
    <location>
        <position position="90"/>
    </location>
    <ligand>
        <name>substrate</name>
    </ligand>
</feature>
<evidence type="ECO:0000255" key="1">
    <source>
        <dbReference type="HAMAP-Rule" id="MF_00549"/>
    </source>
</evidence>
<gene>
    <name evidence="1" type="primary">mgsA</name>
    <name type="ordered locus">Bcep18194_A5618</name>
</gene>
<comment type="function">
    <text evidence="1">Catalyzes the formation of methylglyoxal from dihydroxyacetone phosphate.</text>
</comment>
<comment type="catalytic activity">
    <reaction evidence="1">
        <text>dihydroxyacetone phosphate = methylglyoxal + phosphate</text>
        <dbReference type="Rhea" id="RHEA:17937"/>
        <dbReference type="ChEBI" id="CHEBI:17158"/>
        <dbReference type="ChEBI" id="CHEBI:43474"/>
        <dbReference type="ChEBI" id="CHEBI:57642"/>
        <dbReference type="EC" id="4.2.3.3"/>
    </reaction>
</comment>
<comment type="similarity">
    <text evidence="1">Belongs to the methylglyoxal synthase family.</text>
</comment>
<sequence length="130" mass="13834">MSKPRIALIAHDAKKDEIVALAGEFRATLAQCRLVATGTTGGRIADAHGLEVERKLSGPLGGDLQIGAELADGRIDIVVFLRDPMTAQPHDPDITALVRACDVHDVPVATNVATARMLLDDLARNMQDVC</sequence>
<keyword id="KW-0456">Lyase</keyword>
<reference key="1">
    <citation type="submission" date="2005-10" db="EMBL/GenBank/DDBJ databases">
        <title>Complete sequence of chromosome 1 of Burkholderia sp. 383.</title>
        <authorList>
            <consortium name="US DOE Joint Genome Institute"/>
            <person name="Copeland A."/>
            <person name="Lucas S."/>
            <person name="Lapidus A."/>
            <person name="Barry K."/>
            <person name="Detter J.C."/>
            <person name="Glavina T."/>
            <person name="Hammon N."/>
            <person name="Israni S."/>
            <person name="Pitluck S."/>
            <person name="Chain P."/>
            <person name="Malfatti S."/>
            <person name="Shin M."/>
            <person name="Vergez L."/>
            <person name="Schmutz J."/>
            <person name="Larimer F."/>
            <person name="Land M."/>
            <person name="Kyrpides N."/>
            <person name="Lykidis A."/>
            <person name="Richardson P."/>
        </authorList>
    </citation>
    <scope>NUCLEOTIDE SEQUENCE [LARGE SCALE GENOMIC DNA]</scope>
    <source>
        <strain>ATCC 17760 / DSM 23089 / LMG 22485 / NCIMB 9086 / R18194 / 383</strain>
    </source>
</reference>
<name>MGSA_BURL3</name>
<proteinExistence type="inferred from homology"/>
<dbReference type="EC" id="4.2.3.3" evidence="1"/>
<dbReference type="EMBL" id="CP000151">
    <property type="protein sequence ID" value="ABB09212.1"/>
    <property type="molecule type" value="Genomic_DNA"/>
</dbReference>
<dbReference type="RefSeq" id="WP_011352738.1">
    <property type="nucleotide sequence ID" value="NZ_WNDV01000008.1"/>
</dbReference>
<dbReference type="SMR" id="Q39EA4"/>
<dbReference type="GeneID" id="45095505"/>
<dbReference type="KEGG" id="bur:Bcep18194_A5618"/>
<dbReference type="HOGENOM" id="CLU_120420_1_0_4"/>
<dbReference type="Proteomes" id="UP000002705">
    <property type="component" value="Chromosome 1"/>
</dbReference>
<dbReference type="GO" id="GO:0005829">
    <property type="term" value="C:cytosol"/>
    <property type="evidence" value="ECO:0007669"/>
    <property type="project" value="TreeGrafter"/>
</dbReference>
<dbReference type="GO" id="GO:0008929">
    <property type="term" value="F:methylglyoxal synthase activity"/>
    <property type="evidence" value="ECO:0007669"/>
    <property type="project" value="UniProtKB-UniRule"/>
</dbReference>
<dbReference type="GO" id="GO:0019242">
    <property type="term" value="P:methylglyoxal biosynthetic process"/>
    <property type="evidence" value="ECO:0007669"/>
    <property type="project" value="UniProtKB-UniRule"/>
</dbReference>
<dbReference type="CDD" id="cd01422">
    <property type="entry name" value="MGS"/>
    <property type="match status" value="1"/>
</dbReference>
<dbReference type="Gene3D" id="3.40.50.1380">
    <property type="entry name" value="Methylglyoxal synthase-like domain"/>
    <property type="match status" value="1"/>
</dbReference>
<dbReference type="HAMAP" id="MF_00549">
    <property type="entry name" value="Methylglyoxal_synth"/>
    <property type="match status" value="1"/>
</dbReference>
<dbReference type="InterPro" id="IPR004363">
    <property type="entry name" value="Methylgl_synth"/>
</dbReference>
<dbReference type="InterPro" id="IPR018148">
    <property type="entry name" value="Methylglyoxal_synth_AS"/>
</dbReference>
<dbReference type="InterPro" id="IPR011607">
    <property type="entry name" value="MGS-like_dom"/>
</dbReference>
<dbReference type="InterPro" id="IPR036914">
    <property type="entry name" value="MGS-like_dom_sf"/>
</dbReference>
<dbReference type="NCBIfam" id="TIGR00160">
    <property type="entry name" value="MGSA"/>
    <property type="match status" value="1"/>
</dbReference>
<dbReference type="NCBIfam" id="NF003559">
    <property type="entry name" value="PRK05234.1"/>
    <property type="match status" value="1"/>
</dbReference>
<dbReference type="PANTHER" id="PTHR30492">
    <property type="entry name" value="METHYLGLYOXAL SYNTHASE"/>
    <property type="match status" value="1"/>
</dbReference>
<dbReference type="PANTHER" id="PTHR30492:SF0">
    <property type="entry name" value="METHYLGLYOXAL SYNTHASE"/>
    <property type="match status" value="1"/>
</dbReference>
<dbReference type="Pfam" id="PF02142">
    <property type="entry name" value="MGS"/>
    <property type="match status" value="1"/>
</dbReference>
<dbReference type="PIRSF" id="PIRSF006614">
    <property type="entry name" value="Methylglyox_syn"/>
    <property type="match status" value="1"/>
</dbReference>
<dbReference type="SMART" id="SM00851">
    <property type="entry name" value="MGS"/>
    <property type="match status" value="1"/>
</dbReference>
<dbReference type="SUPFAM" id="SSF52335">
    <property type="entry name" value="Methylglyoxal synthase-like"/>
    <property type="match status" value="1"/>
</dbReference>
<dbReference type="PROSITE" id="PS01335">
    <property type="entry name" value="METHYLGLYOXAL_SYNTH"/>
    <property type="match status" value="1"/>
</dbReference>
<dbReference type="PROSITE" id="PS51855">
    <property type="entry name" value="MGS"/>
    <property type="match status" value="1"/>
</dbReference>
<accession>Q39EA4</accession>
<protein>
    <recommendedName>
        <fullName evidence="1">Methylglyoxal synthase</fullName>
        <shortName evidence="1">MGS</shortName>
        <ecNumber evidence="1">4.2.3.3</ecNumber>
    </recommendedName>
</protein>